<evidence type="ECO:0000255" key="1">
    <source>
        <dbReference type="PROSITE-ProRule" id="PRU00520"/>
    </source>
</evidence>
<evidence type="ECO:0000305" key="2"/>
<accession>Q9X1Q0</accession>
<protein>
    <recommendedName>
        <fullName>Acylphosphatase</fullName>
        <ecNumber>3.6.1.7</ecNumber>
    </recommendedName>
    <alternativeName>
        <fullName>Acylphosphate phosphohydrolase</fullName>
    </alternativeName>
</protein>
<organism>
    <name type="scientific">Thermotoga maritima (strain ATCC 43589 / DSM 3109 / JCM 10099 / NBRC 100826 / MSB8)</name>
    <dbReference type="NCBI Taxonomy" id="243274"/>
    <lineage>
        <taxon>Bacteria</taxon>
        <taxon>Thermotogati</taxon>
        <taxon>Thermotogota</taxon>
        <taxon>Thermotogae</taxon>
        <taxon>Thermotogales</taxon>
        <taxon>Thermotogaceae</taxon>
        <taxon>Thermotoga</taxon>
    </lineage>
</organism>
<dbReference type="EC" id="3.6.1.7"/>
<dbReference type="EMBL" id="AE000512">
    <property type="protein sequence ID" value="AAD36630.1"/>
    <property type="molecule type" value="Genomic_DNA"/>
</dbReference>
<dbReference type="PIR" id="G72240">
    <property type="entry name" value="G72240"/>
</dbReference>
<dbReference type="RefSeq" id="NP_229364.1">
    <property type="nucleotide sequence ID" value="NC_000853.1"/>
</dbReference>
<dbReference type="RefSeq" id="WP_004081975.1">
    <property type="nucleotide sequence ID" value="NZ_CP011107.1"/>
</dbReference>
<dbReference type="SMR" id="Q9X1Q0"/>
<dbReference type="FunCoup" id="Q9X1Q0">
    <property type="interactions" value="131"/>
</dbReference>
<dbReference type="STRING" id="243274.TM_1564"/>
<dbReference type="PaxDb" id="243274-THEMA_06460"/>
<dbReference type="EnsemblBacteria" id="AAD36630">
    <property type="protein sequence ID" value="AAD36630"/>
    <property type="gene ID" value="TM_1564"/>
</dbReference>
<dbReference type="KEGG" id="tma:TM1564"/>
<dbReference type="KEGG" id="tmi:THEMA_06460"/>
<dbReference type="KEGG" id="tmm:Tmari_1572"/>
<dbReference type="KEGG" id="tmw:THMA_1599"/>
<dbReference type="eggNOG" id="COG1254">
    <property type="taxonomic scope" value="Bacteria"/>
</dbReference>
<dbReference type="InParanoid" id="Q9X1Q0"/>
<dbReference type="OrthoDB" id="9808093at2"/>
<dbReference type="Proteomes" id="UP000008183">
    <property type="component" value="Chromosome"/>
</dbReference>
<dbReference type="GO" id="GO:0003998">
    <property type="term" value="F:acylphosphatase activity"/>
    <property type="evidence" value="ECO:0000318"/>
    <property type="project" value="GO_Central"/>
</dbReference>
<dbReference type="Gene3D" id="3.30.70.100">
    <property type="match status" value="1"/>
</dbReference>
<dbReference type="InterPro" id="IPR020456">
    <property type="entry name" value="Acylphosphatase"/>
</dbReference>
<dbReference type="InterPro" id="IPR001792">
    <property type="entry name" value="Acylphosphatase-like_dom"/>
</dbReference>
<dbReference type="InterPro" id="IPR036046">
    <property type="entry name" value="Acylphosphatase-like_dom_sf"/>
</dbReference>
<dbReference type="InterPro" id="IPR017968">
    <property type="entry name" value="Acylphosphatase_CS"/>
</dbReference>
<dbReference type="NCBIfam" id="NF011009">
    <property type="entry name" value="PRK14435.1"/>
    <property type="match status" value="1"/>
</dbReference>
<dbReference type="PANTHER" id="PTHR47268">
    <property type="entry name" value="ACYLPHOSPHATASE"/>
    <property type="match status" value="1"/>
</dbReference>
<dbReference type="PANTHER" id="PTHR47268:SF4">
    <property type="entry name" value="ACYLPHOSPHATASE"/>
    <property type="match status" value="1"/>
</dbReference>
<dbReference type="Pfam" id="PF00708">
    <property type="entry name" value="Acylphosphatase"/>
    <property type="match status" value="1"/>
</dbReference>
<dbReference type="SUPFAM" id="SSF54975">
    <property type="entry name" value="Acylphosphatase/BLUF domain-like"/>
    <property type="match status" value="1"/>
</dbReference>
<dbReference type="PROSITE" id="PS00150">
    <property type="entry name" value="ACYLPHOSPHATASE_1"/>
    <property type="match status" value="1"/>
</dbReference>
<dbReference type="PROSITE" id="PS00151">
    <property type="entry name" value="ACYLPHOSPHATASE_2"/>
    <property type="match status" value="1"/>
</dbReference>
<dbReference type="PROSITE" id="PS51160">
    <property type="entry name" value="ACYLPHOSPHATASE_3"/>
    <property type="match status" value="1"/>
</dbReference>
<reference key="1">
    <citation type="journal article" date="1999" name="Nature">
        <title>Evidence for lateral gene transfer between Archaea and Bacteria from genome sequence of Thermotoga maritima.</title>
        <authorList>
            <person name="Nelson K.E."/>
            <person name="Clayton R.A."/>
            <person name="Gill S.R."/>
            <person name="Gwinn M.L."/>
            <person name="Dodson R.J."/>
            <person name="Haft D.H."/>
            <person name="Hickey E.K."/>
            <person name="Peterson J.D."/>
            <person name="Nelson W.C."/>
            <person name="Ketchum K.A."/>
            <person name="McDonald L.A."/>
            <person name="Utterback T.R."/>
            <person name="Malek J.A."/>
            <person name="Linher K.D."/>
            <person name="Garrett M.M."/>
            <person name="Stewart A.M."/>
            <person name="Cotton M.D."/>
            <person name="Pratt M.S."/>
            <person name="Phillips C.A."/>
            <person name="Richardson D.L."/>
            <person name="Heidelberg J.F."/>
            <person name="Sutton G.G."/>
            <person name="Fleischmann R.D."/>
            <person name="Eisen J.A."/>
            <person name="White O."/>
            <person name="Salzberg S.L."/>
            <person name="Smith H.O."/>
            <person name="Venter J.C."/>
            <person name="Fraser C.M."/>
        </authorList>
    </citation>
    <scope>NUCLEOTIDE SEQUENCE [LARGE SCALE GENOMIC DNA]</scope>
    <source>
        <strain>ATCC 43589 / DSM 3109 / JCM 10099 / NBRC 100826 / MSB8</strain>
    </source>
</reference>
<keyword id="KW-0378">Hydrolase</keyword>
<keyword id="KW-1185">Reference proteome</keyword>
<feature type="chain" id="PRO_0000326833" description="Acylphosphatase">
    <location>
        <begin position="1"/>
        <end position="90"/>
    </location>
</feature>
<feature type="domain" description="Acylphosphatase-like" evidence="1">
    <location>
        <begin position="3"/>
        <end position="89"/>
    </location>
</feature>
<feature type="active site" evidence="1">
    <location>
        <position position="18"/>
    </location>
</feature>
<feature type="active site" evidence="1">
    <location>
        <position position="36"/>
    </location>
</feature>
<sequence length="90" mass="10048">MKALKIRVEGIVQGVGFRYFTRRVAKSLGVKGYVMNMDDGSVFIHAEGDENALRRFLNEVAKGPPAAVVTNVSVEETTPEGYEDFTIKYY</sequence>
<proteinExistence type="inferred from homology"/>
<gene>
    <name type="primary">acyP</name>
    <name type="ordered locus">TM_1564</name>
</gene>
<name>ACYP_THEMA</name>
<comment type="catalytic activity">
    <reaction>
        <text>an acyl phosphate + H2O = a carboxylate + phosphate + H(+)</text>
        <dbReference type="Rhea" id="RHEA:14965"/>
        <dbReference type="ChEBI" id="CHEBI:15377"/>
        <dbReference type="ChEBI" id="CHEBI:15378"/>
        <dbReference type="ChEBI" id="CHEBI:29067"/>
        <dbReference type="ChEBI" id="CHEBI:43474"/>
        <dbReference type="ChEBI" id="CHEBI:59918"/>
        <dbReference type="EC" id="3.6.1.7"/>
    </reaction>
</comment>
<comment type="similarity">
    <text evidence="2">Belongs to the acylphosphatase family.</text>
</comment>